<evidence type="ECO:0000255" key="1">
    <source>
        <dbReference type="HAMAP-Rule" id="MF_00001"/>
    </source>
</evidence>
<accession>Q2P5W1</accession>
<sequence length="315" mass="33602">MTTMQLDSDGRLRHLLTLEGVPRTTLLQLLDRAGQIRDAAVGRVGKRSVLAGTAVCTLFFEPSTRTRSSFHLAAQRLGADVLNFDASTSSTRKGETARDTLKNLEAMGVRGFVVRHPDDGAVKALAAAAGEGTALINAGDGRSAHPTQGLLDMLTLRQAKGTDFSKLKVVIVGDVKHSRVARSDLHALRTLGAGEIRVCGPASLLPDDGILEGCVVGQDFDAMLEGADALMMLRLQRERMEEGLVPSLEQYHTEYGLTRERLARAGHDAAVLHPGPINRGVEITDEVADGAQSCVLRQVANGVAVRMAVLETLLG</sequence>
<name>PYRB_XANOM</name>
<organism>
    <name type="scientific">Xanthomonas oryzae pv. oryzae (strain MAFF 311018)</name>
    <dbReference type="NCBI Taxonomy" id="342109"/>
    <lineage>
        <taxon>Bacteria</taxon>
        <taxon>Pseudomonadati</taxon>
        <taxon>Pseudomonadota</taxon>
        <taxon>Gammaproteobacteria</taxon>
        <taxon>Lysobacterales</taxon>
        <taxon>Lysobacteraceae</taxon>
        <taxon>Xanthomonas</taxon>
    </lineage>
</organism>
<keyword id="KW-0665">Pyrimidine biosynthesis</keyword>
<keyword id="KW-0808">Transferase</keyword>
<protein>
    <recommendedName>
        <fullName evidence="1">Aspartate carbamoyltransferase catalytic subunit</fullName>
        <ecNumber evidence="1">2.1.3.2</ecNumber>
    </recommendedName>
    <alternativeName>
        <fullName evidence="1">Aspartate transcarbamylase</fullName>
        <shortName evidence="1">ATCase</shortName>
    </alternativeName>
</protein>
<feature type="chain" id="PRO_0000301640" description="Aspartate carbamoyltransferase catalytic subunit">
    <location>
        <begin position="1"/>
        <end position="315"/>
    </location>
</feature>
<feature type="binding site" evidence="1">
    <location>
        <position position="65"/>
    </location>
    <ligand>
        <name>carbamoyl phosphate</name>
        <dbReference type="ChEBI" id="CHEBI:58228"/>
    </ligand>
</feature>
<feature type="binding site" evidence="1">
    <location>
        <position position="66"/>
    </location>
    <ligand>
        <name>carbamoyl phosphate</name>
        <dbReference type="ChEBI" id="CHEBI:58228"/>
    </ligand>
</feature>
<feature type="binding site" evidence="1">
    <location>
        <position position="93"/>
    </location>
    <ligand>
        <name>L-aspartate</name>
        <dbReference type="ChEBI" id="CHEBI:29991"/>
    </ligand>
</feature>
<feature type="binding site" evidence="1">
    <location>
        <position position="115"/>
    </location>
    <ligand>
        <name>carbamoyl phosphate</name>
        <dbReference type="ChEBI" id="CHEBI:58228"/>
    </ligand>
</feature>
<feature type="binding site" evidence="1">
    <location>
        <position position="145"/>
    </location>
    <ligand>
        <name>carbamoyl phosphate</name>
        <dbReference type="ChEBI" id="CHEBI:58228"/>
    </ligand>
</feature>
<feature type="binding site" evidence="1">
    <location>
        <position position="148"/>
    </location>
    <ligand>
        <name>carbamoyl phosphate</name>
        <dbReference type="ChEBI" id="CHEBI:58228"/>
    </ligand>
</feature>
<feature type="binding site" evidence="1">
    <location>
        <position position="179"/>
    </location>
    <ligand>
        <name>L-aspartate</name>
        <dbReference type="ChEBI" id="CHEBI:29991"/>
    </ligand>
</feature>
<feature type="binding site" evidence="1">
    <location>
        <position position="234"/>
    </location>
    <ligand>
        <name>L-aspartate</name>
        <dbReference type="ChEBI" id="CHEBI:29991"/>
    </ligand>
</feature>
<feature type="binding site" evidence="1">
    <location>
        <position position="275"/>
    </location>
    <ligand>
        <name>carbamoyl phosphate</name>
        <dbReference type="ChEBI" id="CHEBI:58228"/>
    </ligand>
</feature>
<feature type="binding site" evidence="1">
    <location>
        <position position="276"/>
    </location>
    <ligand>
        <name>carbamoyl phosphate</name>
        <dbReference type="ChEBI" id="CHEBI:58228"/>
    </ligand>
</feature>
<proteinExistence type="inferred from homology"/>
<comment type="function">
    <text evidence="1">Catalyzes the condensation of carbamoyl phosphate and aspartate to form carbamoyl aspartate and inorganic phosphate, the committed step in the de novo pyrimidine nucleotide biosynthesis pathway.</text>
</comment>
<comment type="catalytic activity">
    <reaction evidence="1">
        <text>carbamoyl phosphate + L-aspartate = N-carbamoyl-L-aspartate + phosphate + H(+)</text>
        <dbReference type="Rhea" id="RHEA:20013"/>
        <dbReference type="ChEBI" id="CHEBI:15378"/>
        <dbReference type="ChEBI" id="CHEBI:29991"/>
        <dbReference type="ChEBI" id="CHEBI:32814"/>
        <dbReference type="ChEBI" id="CHEBI:43474"/>
        <dbReference type="ChEBI" id="CHEBI:58228"/>
        <dbReference type="EC" id="2.1.3.2"/>
    </reaction>
</comment>
<comment type="pathway">
    <text evidence="1">Pyrimidine metabolism; UMP biosynthesis via de novo pathway; (S)-dihydroorotate from bicarbonate: step 2/3.</text>
</comment>
<comment type="subunit">
    <text evidence="1">Heterododecamer (2C3:3R2) of six catalytic PyrB chains organized as two trimers (C3), and six regulatory PyrI chains organized as three dimers (R2).</text>
</comment>
<comment type="similarity">
    <text evidence="1">Belongs to the aspartate/ornithine carbamoyltransferase superfamily. ATCase family.</text>
</comment>
<dbReference type="EC" id="2.1.3.2" evidence="1"/>
<dbReference type="EMBL" id="AP008229">
    <property type="protein sequence ID" value="BAE68066.1"/>
    <property type="molecule type" value="Genomic_DNA"/>
</dbReference>
<dbReference type="RefSeq" id="WP_011258227.1">
    <property type="nucleotide sequence ID" value="NC_007705.1"/>
</dbReference>
<dbReference type="SMR" id="Q2P5W1"/>
<dbReference type="KEGG" id="xom:XOO1311"/>
<dbReference type="HOGENOM" id="CLU_043846_2_0_6"/>
<dbReference type="UniPathway" id="UPA00070">
    <property type="reaction ID" value="UER00116"/>
</dbReference>
<dbReference type="GO" id="GO:0005829">
    <property type="term" value="C:cytosol"/>
    <property type="evidence" value="ECO:0007669"/>
    <property type="project" value="TreeGrafter"/>
</dbReference>
<dbReference type="GO" id="GO:0016597">
    <property type="term" value="F:amino acid binding"/>
    <property type="evidence" value="ECO:0007669"/>
    <property type="project" value="InterPro"/>
</dbReference>
<dbReference type="GO" id="GO:0004070">
    <property type="term" value="F:aspartate carbamoyltransferase activity"/>
    <property type="evidence" value="ECO:0007669"/>
    <property type="project" value="UniProtKB-UniRule"/>
</dbReference>
<dbReference type="GO" id="GO:0006207">
    <property type="term" value="P:'de novo' pyrimidine nucleobase biosynthetic process"/>
    <property type="evidence" value="ECO:0007669"/>
    <property type="project" value="InterPro"/>
</dbReference>
<dbReference type="GO" id="GO:0044205">
    <property type="term" value="P:'de novo' UMP biosynthetic process"/>
    <property type="evidence" value="ECO:0007669"/>
    <property type="project" value="UniProtKB-UniRule"/>
</dbReference>
<dbReference type="GO" id="GO:0006520">
    <property type="term" value="P:amino acid metabolic process"/>
    <property type="evidence" value="ECO:0007669"/>
    <property type="project" value="InterPro"/>
</dbReference>
<dbReference type="FunFam" id="3.40.50.1370:FF:000007">
    <property type="entry name" value="Aspartate carbamoyltransferase"/>
    <property type="match status" value="1"/>
</dbReference>
<dbReference type="FunFam" id="3.40.50.1370:FF:000019">
    <property type="entry name" value="Aspartate carbamoyltransferase"/>
    <property type="match status" value="1"/>
</dbReference>
<dbReference type="Gene3D" id="3.40.50.1370">
    <property type="entry name" value="Aspartate/ornithine carbamoyltransferase"/>
    <property type="match status" value="2"/>
</dbReference>
<dbReference type="HAMAP" id="MF_00001">
    <property type="entry name" value="Asp_carb_tr"/>
    <property type="match status" value="1"/>
</dbReference>
<dbReference type="InterPro" id="IPR006132">
    <property type="entry name" value="Asp/Orn_carbamoyltranf_P-bd"/>
</dbReference>
<dbReference type="InterPro" id="IPR006130">
    <property type="entry name" value="Asp/Orn_carbamoylTrfase"/>
</dbReference>
<dbReference type="InterPro" id="IPR036901">
    <property type="entry name" value="Asp/Orn_carbamoylTrfase_sf"/>
</dbReference>
<dbReference type="InterPro" id="IPR002082">
    <property type="entry name" value="Asp_carbamoyltransf"/>
</dbReference>
<dbReference type="InterPro" id="IPR006131">
    <property type="entry name" value="Asp_carbamoyltransf_Asp/Orn-bd"/>
</dbReference>
<dbReference type="NCBIfam" id="TIGR00670">
    <property type="entry name" value="asp_carb_tr"/>
    <property type="match status" value="1"/>
</dbReference>
<dbReference type="NCBIfam" id="NF002032">
    <property type="entry name" value="PRK00856.1"/>
    <property type="match status" value="1"/>
</dbReference>
<dbReference type="PANTHER" id="PTHR45753:SF6">
    <property type="entry name" value="ASPARTATE CARBAMOYLTRANSFERASE"/>
    <property type="match status" value="1"/>
</dbReference>
<dbReference type="PANTHER" id="PTHR45753">
    <property type="entry name" value="ORNITHINE CARBAMOYLTRANSFERASE, MITOCHONDRIAL"/>
    <property type="match status" value="1"/>
</dbReference>
<dbReference type="Pfam" id="PF00185">
    <property type="entry name" value="OTCace"/>
    <property type="match status" value="1"/>
</dbReference>
<dbReference type="Pfam" id="PF02729">
    <property type="entry name" value="OTCace_N"/>
    <property type="match status" value="1"/>
</dbReference>
<dbReference type="PRINTS" id="PR00100">
    <property type="entry name" value="AOTCASE"/>
</dbReference>
<dbReference type="PRINTS" id="PR00101">
    <property type="entry name" value="ATCASE"/>
</dbReference>
<dbReference type="SUPFAM" id="SSF53671">
    <property type="entry name" value="Aspartate/ornithine carbamoyltransferase"/>
    <property type="match status" value="1"/>
</dbReference>
<dbReference type="PROSITE" id="PS00097">
    <property type="entry name" value="CARBAMOYLTRANSFERASE"/>
    <property type="match status" value="1"/>
</dbReference>
<gene>
    <name evidence="1" type="primary">pyrB</name>
    <name type="ordered locus">XOO1311</name>
</gene>
<reference key="1">
    <citation type="journal article" date="2005" name="Jpn. Agric. Res. Q.">
        <title>Genome sequence of Xanthomonas oryzae pv. oryzae suggests contribution of large numbers of effector genes and insertion sequences to its race diversity.</title>
        <authorList>
            <person name="Ochiai H."/>
            <person name="Inoue Y."/>
            <person name="Takeya M."/>
            <person name="Sasaki A."/>
            <person name="Kaku H."/>
        </authorList>
    </citation>
    <scope>NUCLEOTIDE SEQUENCE [LARGE SCALE GENOMIC DNA]</scope>
    <source>
        <strain>MAFF 311018</strain>
    </source>
</reference>